<proteinExistence type="inferred from homology"/>
<organism>
    <name type="scientific">Stachybotrys chartarum (strain CBS 109288 / IBT 7711)</name>
    <name type="common">Toxic black mold</name>
    <name type="synonym">Stilbospora chartarum</name>
    <dbReference type="NCBI Taxonomy" id="1280523"/>
    <lineage>
        <taxon>Eukaryota</taxon>
        <taxon>Fungi</taxon>
        <taxon>Dikarya</taxon>
        <taxon>Ascomycota</taxon>
        <taxon>Pezizomycotina</taxon>
        <taxon>Sordariomycetes</taxon>
        <taxon>Hypocreomycetidae</taxon>
        <taxon>Hypocreales</taxon>
        <taxon>Stachybotryaceae</taxon>
        <taxon>Stachybotrys</taxon>
    </lineage>
</organism>
<dbReference type="EC" id="2.3.1.-" evidence="4"/>
<dbReference type="EMBL" id="KL647604">
    <property type="protein sequence ID" value="KEY74372.1"/>
    <property type="molecule type" value="Genomic_DNA"/>
</dbReference>
<dbReference type="SMR" id="A0A084B9Z3"/>
<dbReference type="HOGENOM" id="CLU_026450_5_0_1"/>
<dbReference type="OrthoDB" id="286770at5125"/>
<dbReference type="Proteomes" id="UP000028045">
    <property type="component" value="Unassembled WGS sequence"/>
</dbReference>
<dbReference type="GO" id="GO:0016746">
    <property type="term" value="F:acyltransferase activity"/>
    <property type="evidence" value="ECO:0007669"/>
    <property type="project" value="UniProtKB-KW"/>
</dbReference>
<dbReference type="Gene3D" id="3.30.559.10">
    <property type="entry name" value="Chloramphenicol acetyltransferase-like domain"/>
    <property type="match status" value="2"/>
</dbReference>
<dbReference type="InterPro" id="IPR023213">
    <property type="entry name" value="CAT-like_dom_sf"/>
</dbReference>
<dbReference type="InterPro" id="IPR054710">
    <property type="entry name" value="Tri101-like_N"/>
</dbReference>
<dbReference type="Pfam" id="PF22664">
    <property type="entry name" value="TRI-like_N"/>
    <property type="match status" value="1"/>
</dbReference>
<reference key="1">
    <citation type="journal article" date="2014" name="BMC Genomics">
        <title>Comparative genome sequencing reveals chemotype-specific gene clusters in the toxigenic black mold Stachybotrys.</title>
        <authorList>
            <person name="Semeiks J."/>
            <person name="Borek D."/>
            <person name="Otwinowski Z."/>
            <person name="Grishin N.V."/>
        </authorList>
    </citation>
    <scope>NUCLEOTIDE SEQUENCE [LARGE SCALE GENOMIC DNA]</scope>
    <scope>IDENTIFICATION</scope>
    <scope>FUNCTION</scope>
    <source>
        <strain>CBS 109288 / IBT 7711</strain>
    </source>
</reference>
<name>SAT5_STACB</name>
<accession>A0A084B9Z3</accession>
<sequence>MSTMAKSPEANNLHQDVIAQFPILNGYTHTVGAFSQPLNVSRLFIIDEIQTAYDELRVQIPWLAHQVVVVDAGPGKSGYITTAPWPSSAPPNDVTYEEKDDAFPSLNTLIKSGGSFLATKDLVGYPGLPEPHGLHPTPVATIRLVFITGGVLVVLSTHHNIVDGIGLMQMWDYLDILMGGGAISRQDARSANADRARVLPLIAPGEPVKDYSHLIRPNPWPLPPPPKTEWRLFKMHPWALAEIRSRARDGTDQRASARPASSDDALTAFCWQRVSAMRLASGRVTGDQVSKFGRAVNGRSAMGLDSSYLFHMMLHTETRLPIEQIARSTLAELSTQLRKDLDAARTEWSVRSYATFLAGVADKTRLLYGGITNPQTDLGGTSTMHWASRRPIRLGLLGDCHLIRKPEGMPLPGCLYFMPSGGTSGVVQLLLCLPKEELDALQEDAEWKHYTESGGRRVDGPRL</sequence>
<keyword id="KW-0012">Acyltransferase</keyword>
<keyword id="KW-0808">Transferase</keyword>
<feature type="chain" id="PRO_0000442392" description="O-acetyltransferase SAT5">
    <location>
        <begin position="1"/>
        <end position="463"/>
    </location>
</feature>
<comment type="function">
    <text evidence="4">O-acetyltransferase; part of the satratoxin SC1 cluster involved in the biosynthesis of satratoxins, trichothecene mycotoxins that are associated with human food poisonings (PubMed:25015739). Satratoxins are suggested to be made by products of multiple gene clusters (SC1, SC2 and SC3) that encode 21 proteins in all, including polyketide synthases, acetyltransferases, and other enzymes expected to modify the trichothecene skeleton (PubMed:25015739). SC1 encodes 10 proteins, SAT1 to SAT10 (PubMed:25015739). The largest are SAT8, which encodes a putative polyketide synthase (PKS) with a conventional non-reducing architecture, and SAT10, a putative protein containing four ankyrin repeats and thus may be involved in protein scaffolding (PubMed:25015739). The putative short-chain reductase SAT3 may assist the PKS in some capacity (PubMed:25015739). SAT6 contains a secretory lipase domain and acts probably as a trichothecene esterase (PubMed:25015739). SAT5 encodes a putative acetyltransferase, and so, with SAT6, may affect endogenous protection from toxicity (PubMed:25015739). The probable transcription factor SAT9 may regulate the expression of the SC1 cluster (PubMed:25015739). SC2 encodes proteins SAT11 to SAT16, the largest of which encodes the putative reducing PKS SAT13 (PubMed:25015739). SAT11 is a cytochrome P450 monooxygenase, while SAT14 and SAT16 are probable acetyltransferases (PubMed:25015739). The SC2 cluster may be regulated by the transcription factor SAT15 (PubMed:25015739). SC3 is a small cluster that encodes 5 proteins, SAT17 to SAT21 (PubMed:25015739). SAT21 is a putative MFS-type transporter which may have a role in exporting secondary metabolites (PubMed:25015739). The four other proteins putatively encoded in SC3 include the taurine hydroxylase-like protein SAT17, the O-methyltransferase SAT18, the acetyltransferase SAT19, and the Cys6-type zinc finger SAT20, the latter being probably involved in regulation of SC3 expression (PubMed:25015739).</text>
</comment>
<comment type="pathway">
    <text evidence="1">Mycotoxin biosynthesis.</text>
</comment>
<comment type="miscellaneous">
    <text evidence="3">Trichothecenes are sesquiterpenoid toxins that act by inhibiting protein biosynthesis.</text>
</comment>
<comment type="similarity">
    <text evidence="3">Belongs to the trichothecene 3-O-acetyltransferase family.</text>
</comment>
<evidence type="ECO:0000269" key="1">
    <source>
    </source>
</evidence>
<evidence type="ECO:0000303" key="2">
    <source>
    </source>
</evidence>
<evidence type="ECO:0000305" key="3"/>
<evidence type="ECO:0000305" key="4">
    <source>
    </source>
</evidence>
<protein>
    <recommendedName>
        <fullName evidence="2">O-acetyltransferase SAT5</fullName>
        <ecNumber evidence="4">2.3.1.-</ecNumber>
    </recommendedName>
    <alternativeName>
        <fullName evidence="2">Satratoxin biosynthesis SC1 cluster protein 5</fullName>
    </alternativeName>
</protein>
<gene>
    <name evidence="2" type="primary">SAT5</name>
    <name type="ORF">S7711_07279</name>
</gene>